<reference key="1">
    <citation type="submission" date="2006-12" db="EMBL/GenBank/DDBJ databases">
        <title>Complete sequence of Acidovorax avenae subsp. citrulli AAC00-1.</title>
        <authorList>
            <person name="Copeland A."/>
            <person name="Lucas S."/>
            <person name="Lapidus A."/>
            <person name="Barry K."/>
            <person name="Detter J.C."/>
            <person name="Glavina del Rio T."/>
            <person name="Dalin E."/>
            <person name="Tice H."/>
            <person name="Pitluck S."/>
            <person name="Kiss H."/>
            <person name="Brettin T."/>
            <person name="Bruce D."/>
            <person name="Han C."/>
            <person name="Tapia R."/>
            <person name="Gilna P."/>
            <person name="Schmutz J."/>
            <person name="Larimer F."/>
            <person name="Land M."/>
            <person name="Hauser L."/>
            <person name="Kyrpides N."/>
            <person name="Kim E."/>
            <person name="Stahl D."/>
            <person name="Richardson P."/>
        </authorList>
    </citation>
    <scope>NUCLEOTIDE SEQUENCE [LARGE SCALE GENOMIC DNA]</scope>
    <source>
        <strain>AAC00-1</strain>
    </source>
</reference>
<protein>
    <recommendedName>
        <fullName evidence="1">UDP-N-acetylglucosamine 1-carboxyvinyltransferase</fullName>
        <ecNumber evidence="1">2.5.1.7</ecNumber>
    </recommendedName>
    <alternativeName>
        <fullName evidence="1">Enoylpyruvate transferase</fullName>
    </alternativeName>
    <alternativeName>
        <fullName evidence="1">UDP-N-acetylglucosamine enolpyruvyl transferase</fullName>
        <shortName evidence="1">EPT</shortName>
    </alternativeName>
</protein>
<dbReference type="EC" id="2.5.1.7" evidence="1"/>
<dbReference type="EMBL" id="CP000512">
    <property type="protein sequence ID" value="ABM31620.1"/>
    <property type="molecule type" value="Genomic_DNA"/>
</dbReference>
<dbReference type="RefSeq" id="WP_011794178.1">
    <property type="nucleotide sequence ID" value="NC_008752.1"/>
</dbReference>
<dbReference type="SMR" id="A1TKY2"/>
<dbReference type="STRING" id="397945.Aave_1022"/>
<dbReference type="GeneID" id="79790678"/>
<dbReference type="KEGG" id="aav:Aave_1022"/>
<dbReference type="eggNOG" id="COG0766">
    <property type="taxonomic scope" value="Bacteria"/>
</dbReference>
<dbReference type="HOGENOM" id="CLU_027387_0_0_4"/>
<dbReference type="OrthoDB" id="9803760at2"/>
<dbReference type="UniPathway" id="UPA00219"/>
<dbReference type="Proteomes" id="UP000002596">
    <property type="component" value="Chromosome"/>
</dbReference>
<dbReference type="GO" id="GO:0005737">
    <property type="term" value="C:cytoplasm"/>
    <property type="evidence" value="ECO:0007669"/>
    <property type="project" value="UniProtKB-SubCell"/>
</dbReference>
<dbReference type="GO" id="GO:0008760">
    <property type="term" value="F:UDP-N-acetylglucosamine 1-carboxyvinyltransferase activity"/>
    <property type="evidence" value="ECO:0007669"/>
    <property type="project" value="UniProtKB-UniRule"/>
</dbReference>
<dbReference type="GO" id="GO:0051301">
    <property type="term" value="P:cell division"/>
    <property type="evidence" value="ECO:0007669"/>
    <property type="project" value="UniProtKB-KW"/>
</dbReference>
<dbReference type="GO" id="GO:0071555">
    <property type="term" value="P:cell wall organization"/>
    <property type="evidence" value="ECO:0007669"/>
    <property type="project" value="UniProtKB-KW"/>
</dbReference>
<dbReference type="GO" id="GO:0009252">
    <property type="term" value="P:peptidoglycan biosynthetic process"/>
    <property type="evidence" value="ECO:0007669"/>
    <property type="project" value="UniProtKB-UniRule"/>
</dbReference>
<dbReference type="GO" id="GO:0008360">
    <property type="term" value="P:regulation of cell shape"/>
    <property type="evidence" value="ECO:0007669"/>
    <property type="project" value="UniProtKB-KW"/>
</dbReference>
<dbReference type="GO" id="GO:0019277">
    <property type="term" value="P:UDP-N-acetylgalactosamine biosynthetic process"/>
    <property type="evidence" value="ECO:0007669"/>
    <property type="project" value="InterPro"/>
</dbReference>
<dbReference type="CDD" id="cd01555">
    <property type="entry name" value="UdpNAET"/>
    <property type="match status" value="1"/>
</dbReference>
<dbReference type="FunFam" id="3.65.10.10:FF:000001">
    <property type="entry name" value="UDP-N-acetylglucosamine 1-carboxyvinyltransferase"/>
    <property type="match status" value="1"/>
</dbReference>
<dbReference type="Gene3D" id="3.65.10.10">
    <property type="entry name" value="Enolpyruvate transferase domain"/>
    <property type="match status" value="2"/>
</dbReference>
<dbReference type="HAMAP" id="MF_00111">
    <property type="entry name" value="MurA"/>
    <property type="match status" value="1"/>
</dbReference>
<dbReference type="InterPro" id="IPR001986">
    <property type="entry name" value="Enolpyruvate_Tfrase_dom"/>
</dbReference>
<dbReference type="InterPro" id="IPR036968">
    <property type="entry name" value="Enolpyruvate_Tfrase_sf"/>
</dbReference>
<dbReference type="InterPro" id="IPR050068">
    <property type="entry name" value="MurA_subfamily"/>
</dbReference>
<dbReference type="InterPro" id="IPR013792">
    <property type="entry name" value="RNA3'P_cycl/enolpyr_Trfase_a/b"/>
</dbReference>
<dbReference type="InterPro" id="IPR005750">
    <property type="entry name" value="UDP_GlcNAc_COvinyl_MurA"/>
</dbReference>
<dbReference type="NCBIfam" id="TIGR01072">
    <property type="entry name" value="murA"/>
    <property type="match status" value="1"/>
</dbReference>
<dbReference type="NCBIfam" id="NF006873">
    <property type="entry name" value="PRK09369.1"/>
    <property type="match status" value="1"/>
</dbReference>
<dbReference type="PANTHER" id="PTHR43783">
    <property type="entry name" value="UDP-N-ACETYLGLUCOSAMINE 1-CARBOXYVINYLTRANSFERASE"/>
    <property type="match status" value="1"/>
</dbReference>
<dbReference type="PANTHER" id="PTHR43783:SF1">
    <property type="entry name" value="UDP-N-ACETYLGLUCOSAMINE 1-CARBOXYVINYLTRANSFERASE"/>
    <property type="match status" value="1"/>
</dbReference>
<dbReference type="Pfam" id="PF00275">
    <property type="entry name" value="EPSP_synthase"/>
    <property type="match status" value="1"/>
</dbReference>
<dbReference type="SUPFAM" id="SSF55205">
    <property type="entry name" value="EPT/RTPC-like"/>
    <property type="match status" value="1"/>
</dbReference>
<evidence type="ECO:0000255" key="1">
    <source>
        <dbReference type="HAMAP-Rule" id="MF_00111"/>
    </source>
</evidence>
<comment type="function">
    <text evidence="1">Cell wall formation. Adds enolpyruvyl to UDP-N-acetylglucosamine.</text>
</comment>
<comment type="catalytic activity">
    <reaction evidence="1">
        <text>phosphoenolpyruvate + UDP-N-acetyl-alpha-D-glucosamine = UDP-N-acetyl-3-O-(1-carboxyvinyl)-alpha-D-glucosamine + phosphate</text>
        <dbReference type="Rhea" id="RHEA:18681"/>
        <dbReference type="ChEBI" id="CHEBI:43474"/>
        <dbReference type="ChEBI" id="CHEBI:57705"/>
        <dbReference type="ChEBI" id="CHEBI:58702"/>
        <dbReference type="ChEBI" id="CHEBI:68483"/>
        <dbReference type="EC" id="2.5.1.7"/>
    </reaction>
</comment>
<comment type="pathway">
    <text evidence="1">Cell wall biogenesis; peptidoglycan biosynthesis.</text>
</comment>
<comment type="subcellular location">
    <subcellularLocation>
        <location evidence="1">Cytoplasm</location>
    </subcellularLocation>
</comment>
<comment type="similarity">
    <text evidence="1">Belongs to the EPSP synthase family. MurA subfamily.</text>
</comment>
<proteinExistence type="inferred from homology"/>
<feature type="chain" id="PRO_1000023010" description="UDP-N-acetylglucosamine 1-carboxyvinyltransferase">
    <location>
        <begin position="1"/>
        <end position="434"/>
    </location>
</feature>
<feature type="active site" description="Proton donor" evidence="1">
    <location>
        <position position="123"/>
    </location>
</feature>
<feature type="binding site" evidence="1">
    <location>
        <begin position="22"/>
        <end position="23"/>
    </location>
    <ligand>
        <name>phosphoenolpyruvate</name>
        <dbReference type="ChEBI" id="CHEBI:58702"/>
    </ligand>
</feature>
<feature type="binding site" evidence="1">
    <location>
        <position position="99"/>
    </location>
    <ligand>
        <name>UDP-N-acetyl-alpha-D-glucosamine</name>
        <dbReference type="ChEBI" id="CHEBI:57705"/>
    </ligand>
</feature>
<feature type="binding site" evidence="1">
    <location>
        <begin position="128"/>
        <end position="132"/>
    </location>
    <ligand>
        <name>UDP-N-acetyl-alpha-D-glucosamine</name>
        <dbReference type="ChEBI" id="CHEBI:57705"/>
    </ligand>
</feature>
<feature type="binding site" evidence="1">
    <location>
        <position position="317"/>
    </location>
    <ligand>
        <name>UDP-N-acetyl-alpha-D-glucosamine</name>
        <dbReference type="ChEBI" id="CHEBI:57705"/>
    </ligand>
</feature>
<feature type="binding site" evidence="1">
    <location>
        <position position="339"/>
    </location>
    <ligand>
        <name>UDP-N-acetyl-alpha-D-glucosamine</name>
        <dbReference type="ChEBI" id="CHEBI:57705"/>
    </ligand>
</feature>
<feature type="modified residue" description="2-(S-cysteinyl)pyruvic acid O-phosphothioketal" evidence="1">
    <location>
        <position position="123"/>
    </location>
</feature>
<gene>
    <name evidence="1" type="primary">murA</name>
    <name type="ordered locus">Aave_1022</name>
</gene>
<keyword id="KW-0131">Cell cycle</keyword>
<keyword id="KW-0132">Cell division</keyword>
<keyword id="KW-0133">Cell shape</keyword>
<keyword id="KW-0961">Cell wall biogenesis/degradation</keyword>
<keyword id="KW-0963">Cytoplasm</keyword>
<keyword id="KW-0573">Peptidoglycan synthesis</keyword>
<keyword id="KW-0670">Pyruvate</keyword>
<keyword id="KW-0808">Transferase</keyword>
<accession>A1TKY2</accession>
<sequence length="434" mass="45637">MDQLQIRGGRALSGDVPISGAKNAALPELCAALLTAEPVTLLNVPRLQDVATMLQLIRNMGVAAEHSQGDDRASSGTVRIDAGALSTPEAPYELVKTMRASVLALGPLLARFGEATVSLPGGCAIGSRPVDQHIKGLSAMGAEIVVEHGYMIARLPEGRSRLQGARITTDMVTVTGTENLLMAATLADGETVLENAAQEPEVVDLAEMLIAMGAQIEGHGTSRIRVQGVERLHGCTHRVVADRIEAGTFLCAVAATGGEALLRHGRADHLDAVIDKLRDAGVTVEAVDGGIRVRSPGAGQLQAQSFRTTEYPGFPTDMQAQFMALNVVAQGTSRVTETIFENRFMHVDELLRLGARIQADGKVAVIEGLGDTGALLSGATVMATDLRASASLVIAGLVATGQTTVDRIYHLDRGYDCMEGKLRALGADIERVKA</sequence>
<name>MURA_PARC0</name>
<organism>
    <name type="scientific">Paracidovorax citrulli (strain AAC00-1)</name>
    <name type="common">Acidovorax citrulli</name>
    <dbReference type="NCBI Taxonomy" id="397945"/>
    <lineage>
        <taxon>Bacteria</taxon>
        <taxon>Pseudomonadati</taxon>
        <taxon>Pseudomonadota</taxon>
        <taxon>Betaproteobacteria</taxon>
        <taxon>Burkholderiales</taxon>
        <taxon>Comamonadaceae</taxon>
        <taxon>Paracidovorax</taxon>
    </lineage>
</organism>